<accession>G5EC32</accession>
<accession>O62482</accession>
<protein>
    <recommendedName>
        <fullName evidence="7">Sorbin and SH3 domain-containing protein 1 homolog</fullName>
    </recommendedName>
</protein>
<dbReference type="EMBL" id="BX284604">
    <property type="protein sequence ID" value="CAA16388.2"/>
    <property type="molecule type" value="Genomic_DNA"/>
</dbReference>
<dbReference type="EMBL" id="BX284604">
    <property type="protein sequence ID" value="CBJ25342.1"/>
    <property type="molecule type" value="Genomic_DNA"/>
</dbReference>
<dbReference type="PIR" id="T26940">
    <property type="entry name" value="T26940"/>
</dbReference>
<dbReference type="RefSeq" id="NP_001041035.2">
    <molecule id="G5EC32-1"/>
    <property type="nucleotide sequence ID" value="NM_001047570.4"/>
</dbReference>
<dbReference type="RefSeq" id="NP_001255756.1">
    <molecule id="G5EC32-2"/>
    <property type="nucleotide sequence ID" value="NM_001268827.5"/>
</dbReference>
<dbReference type="SMR" id="G5EC32"/>
<dbReference type="DIP" id="DIP-24971N"/>
<dbReference type="FunCoup" id="G5EC32">
    <property type="interactions" value="153"/>
</dbReference>
<dbReference type="IntAct" id="G5EC32">
    <property type="interactions" value="71"/>
</dbReference>
<dbReference type="MINT" id="G5EC32"/>
<dbReference type="STRING" id="6239.Y45F10D.13a.1"/>
<dbReference type="PaxDb" id="6239-Y45F10D.13a"/>
<dbReference type="PeptideAtlas" id="G5EC32"/>
<dbReference type="EnsemblMetazoa" id="Y45F10D.13a.1">
    <molecule id="G5EC32-1"/>
    <property type="protein sequence ID" value="Y45F10D.13a.1"/>
    <property type="gene ID" value="WBGene00012891"/>
</dbReference>
<dbReference type="EnsemblMetazoa" id="Y45F10D.13c.1">
    <molecule id="G5EC32-2"/>
    <property type="protein sequence ID" value="Y45F10D.13c.1"/>
    <property type="gene ID" value="WBGene00012891"/>
</dbReference>
<dbReference type="GeneID" id="3565590"/>
<dbReference type="KEGG" id="cel:CELE_Y45F10D.13"/>
<dbReference type="UCSC" id="Y45F10D.13b">
    <property type="organism name" value="c. elegans"/>
</dbReference>
<dbReference type="AGR" id="WB:WBGene00012891"/>
<dbReference type="CTD" id="3565590"/>
<dbReference type="WormBase" id="Y45F10D.13a">
    <molecule id="G5EC32-1"/>
    <property type="protein sequence ID" value="CE44448"/>
    <property type="gene ID" value="WBGene00012891"/>
    <property type="gene designation" value="sorb-1"/>
</dbReference>
<dbReference type="WormBase" id="Y45F10D.13c">
    <molecule id="G5EC32-2"/>
    <property type="protein sequence ID" value="CE39436"/>
    <property type="gene ID" value="WBGene00012891"/>
    <property type="gene designation" value="sorb-1"/>
</dbReference>
<dbReference type="eggNOG" id="KOG4225">
    <property type="taxonomic scope" value="Eukaryota"/>
</dbReference>
<dbReference type="GeneTree" id="ENSGT00940000172418"/>
<dbReference type="HOGENOM" id="CLU_291067_0_0_1"/>
<dbReference type="InParanoid" id="G5EC32"/>
<dbReference type="OMA" id="WINIFES"/>
<dbReference type="OrthoDB" id="73680at2759"/>
<dbReference type="Reactome" id="R-CEL-264870">
    <property type="pathway name" value="Caspase-mediated cleavage of cytoskeletal proteins"/>
</dbReference>
<dbReference type="Reactome" id="R-CEL-445355">
    <property type="pathway name" value="Smooth Muscle Contraction"/>
</dbReference>
<dbReference type="Reactome" id="R-CEL-6794361">
    <property type="pathway name" value="Neurexins and neuroligins"/>
</dbReference>
<dbReference type="Reactome" id="R-CEL-6798695">
    <property type="pathway name" value="Neutrophil degranulation"/>
</dbReference>
<dbReference type="SignaLink" id="G5EC32"/>
<dbReference type="PRO" id="PR:G5EC32"/>
<dbReference type="Proteomes" id="UP000001940">
    <property type="component" value="Chromosome IV"/>
</dbReference>
<dbReference type="Bgee" id="WBGene00012891">
    <property type="expression patterns" value="Expressed in pharyngeal muscle cell (C elegans) and 3 other cell types or tissues"/>
</dbReference>
<dbReference type="ExpressionAtlas" id="G5EC32">
    <property type="expression patterns" value="baseline and differential"/>
</dbReference>
<dbReference type="GO" id="GO:0005912">
    <property type="term" value="C:adherens junction"/>
    <property type="evidence" value="ECO:0007669"/>
    <property type="project" value="UniProtKB-SubCell"/>
</dbReference>
<dbReference type="GO" id="GO:0097433">
    <property type="term" value="C:dense body"/>
    <property type="evidence" value="ECO:0000314"/>
    <property type="project" value="UniProtKB"/>
</dbReference>
<dbReference type="GO" id="GO:0005925">
    <property type="term" value="C:focal adhesion"/>
    <property type="evidence" value="ECO:0000314"/>
    <property type="project" value="UniProtKB"/>
</dbReference>
<dbReference type="GO" id="GO:0005886">
    <property type="term" value="C:plasma membrane"/>
    <property type="evidence" value="ECO:0000314"/>
    <property type="project" value="UniProtKB"/>
</dbReference>
<dbReference type="GO" id="GO:0051659">
    <property type="term" value="P:maintenance of mitochondrion location"/>
    <property type="evidence" value="ECO:0000315"/>
    <property type="project" value="UniProtKB"/>
</dbReference>
<dbReference type="GO" id="GO:0045214">
    <property type="term" value="P:sarcomere organization"/>
    <property type="evidence" value="ECO:0000315"/>
    <property type="project" value="UniProtKB"/>
</dbReference>
<dbReference type="CDD" id="cd11781">
    <property type="entry name" value="SH3_Sorbs_1"/>
    <property type="match status" value="2"/>
</dbReference>
<dbReference type="CDD" id="cd11780">
    <property type="entry name" value="SH3_Sorbs_3"/>
    <property type="match status" value="1"/>
</dbReference>
<dbReference type="FunFam" id="2.30.30.40:FF:000001">
    <property type="entry name" value="Sorbin and SH3 domain-containing protein 1 isoform 2"/>
    <property type="match status" value="1"/>
</dbReference>
<dbReference type="Gene3D" id="2.30.30.40">
    <property type="entry name" value="SH3 Domains"/>
    <property type="match status" value="3"/>
</dbReference>
<dbReference type="InterPro" id="IPR050384">
    <property type="entry name" value="Endophilin_SH3RF"/>
</dbReference>
<dbReference type="InterPro" id="IPR036028">
    <property type="entry name" value="SH3-like_dom_sf"/>
</dbReference>
<dbReference type="InterPro" id="IPR001452">
    <property type="entry name" value="SH3_domain"/>
</dbReference>
<dbReference type="InterPro" id="IPR003127">
    <property type="entry name" value="SoHo_dom"/>
</dbReference>
<dbReference type="PANTHER" id="PTHR14167:SF116">
    <property type="entry name" value="CAP, ISOFORM AC"/>
    <property type="match status" value="1"/>
</dbReference>
<dbReference type="PANTHER" id="PTHR14167">
    <property type="entry name" value="SH3 DOMAIN-CONTAINING"/>
    <property type="match status" value="1"/>
</dbReference>
<dbReference type="Pfam" id="PF14604">
    <property type="entry name" value="SH3_9"/>
    <property type="match status" value="3"/>
</dbReference>
<dbReference type="SMART" id="SM00326">
    <property type="entry name" value="SH3"/>
    <property type="match status" value="3"/>
</dbReference>
<dbReference type="SMART" id="SM00459">
    <property type="entry name" value="Sorb"/>
    <property type="match status" value="1"/>
</dbReference>
<dbReference type="SUPFAM" id="SSF50044">
    <property type="entry name" value="SH3-domain"/>
    <property type="match status" value="3"/>
</dbReference>
<dbReference type="PROSITE" id="PS50002">
    <property type="entry name" value="SH3"/>
    <property type="match status" value="3"/>
</dbReference>
<gene>
    <name evidence="6 9" type="primary">sorb-1</name>
    <name evidence="9" type="ORF">Y45F10D.13</name>
</gene>
<name>SRBS1_CAEEL</name>
<sequence>MMHHPHPFGSNLANSSEPQQPSGQYLNPAADAYNFDTFEDSDKFSPKGNVAALRNVIHGQLDMKTPTGNSSRYQKPAPPPVDSTPSWAKNVKVYEPNGYVDPHLNKHNMGRVLDGPVNPNKYFQGVPPASYSQVKHNESKPPVPPSTKPPHSAAQALQAQVLQSSKAPSQPQQSQKTSYRIPYDVALDPRHHLGEFDIDDSASIISSCISTFGESSEIAGFSAAAEQRHLYEQYRKKLMEEKNELKEGSETPCVSLSEKVMTSSTENLKNGNNQQNQQPEPQPPSSSIFNSELTPFGHVAPVAKQFEPTNFPPFSPEKESEIKRSIDLESSQLLVKSKSPAPYSTSSTDHYGTIRRKHKPVAIDLSKSSPNLASQSPSNLFFGASFEEKQNRSPMTSTPSYKEQGFKNDSLNDSLNQAFEIASSIETTKNAYEAPPTPKSASHDRSISDTYPVSSSTTSTWPSHTTTPTTTTAAAPIAAVAPQTYTEQQPMSTSMSSSVMSTNMDEPIVVGSHQQIPQQSPDSSPERNEDMSQWYRKMFKQMHRKGEDGSNEGKEQHFINPSNVTDGIGRTTPTASNLGRSRENLSFNQHRPDHPSSYFDSLEHGPNDQYNNQERVKQSNEEELLRLKAEKLAEELRKEKERKHSFIPSSAPSLQNNMDRLNSLLYDFSSDIQEPAHRDYTPQPVMTATAVYKFEPRSARELPLNRGDIIRIIREVDGYWMEGERNGRSGIFPTSYVQINTGNQGDSQKMRAIYPFTARSDTELSLKRGEIITRRRQIDSNWLEGSNQIGIVGIFPASYVEPIEQVEQHIPTIVPNRPKTPKIEDQVYNQVYKPNETVIMQSNQGYYDKAAVVPNNKVRFDLPSGSDSNLQMSLNPHQNQFPPTHTQTSTQQPSNYGMKKIEYEREKVVEEVPPMHMDQYRKLNDEPKNPKKDTNILMNAASLIPKGSEMYRAVYPYQPQKEDELQLYTNDIIFVVEKCDDGWFIGTSLRTGDFGIFPGNYVKRH</sequence>
<feature type="chain" id="PRO_0000447668" description="Sorbin and SH3 domain-containing protein 1 homolog">
    <location>
        <begin position="1"/>
        <end position="1005"/>
    </location>
</feature>
<feature type="domain" description="SoHo" evidence="3">
    <location>
        <begin position="499"/>
        <end position="567"/>
    </location>
</feature>
<feature type="domain" description="SH3 1" evidence="2">
    <location>
        <begin position="683"/>
        <end position="742"/>
    </location>
</feature>
<feature type="domain" description="SH3 2" evidence="2">
    <location>
        <begin position="745"/>
        <end position="805"/>
    </location>
</feature>
<feature type="domain" description="SH3 3" evidence="2">
    <location>
        <begin position="946"/>
        <end position="1005"/>
    </location>
</feature>
<feature type="region of interest" description="Disordered" evidence="4">
    <location>
        <begin position="1"/>
        <end position="31"/>
    </location>
</feature>
<feature type="region of interest" description="Disordered" evidence="4">
    <location>
        <begin position="61"/>
        <end position="86"/>
    </location>
</feature>
<feature type="region of interest" description="Disordered" evidence="4">
    <location>
        <begin position="99"/>
        <end position="153"/>
    </location>
</feature>
<feature type="region of interest" description="Disordered" evidence="4">
    <location>
        <begin position="243"/>
        <end position="292"/>
    </location>
</feature>
<feature type="region of interest" description="Disordered" evidence="4">
    <location>
        <begin position="386"/>
        <end position="409"/>
    </location>
</feature>
<feature type="region of interest" description="Disordered" evidence="4">
    <location>
        <begin position="427"/>
        <end position="475"/>
    </location>
</feature>
<feature type="region of interest" description="Disordered" evidence="4">
    <location>
        <begin position="542"/>
        <end position="622"/>
    </location>
</feature>
<feature type="coiled-coil region" evidence="1">
    <location>
        <begin position="610"/>
        <end position="642"/>
    </location>
</feature>
<feature type="compositionally biased region" description="Polar residues" evidence="4">
    <location>
        <begin position="11"/>
        <end position="25"/>
    </location>
</feature>
<feature type="compositionally biased region" description="Polar residues" evidence="4">
    <location>
        <begin position="260"/>
        <end position="269"/>
    </location>
</feature>
<feature type="compositionally biased region" description="Low complexity" evidence="4">
    <location>
        <begin position="270"/>
        <end position="279"/>
    </location>
</feature>
<feature type="compositionally biased region" description="Polar residues" evidence="4">
    <location>
        <begin position="392"/>
        <end position="409"/>
    </location>
</feature>
<feature type="compositionally biased region" description="Low complexity" evidence="4">
    <location>
        <begin position="448"/>
        <end position="475"/>
    </location>
</feature>
<feature type="compositionally biased region" description="Basic and acidic residues" evidence="4">
    <location>
        <begin position="544"/>
        <end position="557"/>
    </location>
</feature>
<feature type="compositionally biased region" description="Polar residues" evidence="4">
    <location>
        <begin position="559"/>
        <end position="589"/>
    </location>
</feature>
<feature type="splice variant" id="VSP_060226" description="In isoform c." evidence="7">
    <original>MHHPHPFGSNLANSSEPQQPSGQYLNPAADAYNFDTFEDSDKFSPKGNVAALRNVIHGQLDMKTPTGNSSRYQKPAPPPVDSTPSWAKNVKVYEPNGYVDPHLNKHNMGRVLDGPVNPNKYFQGVPPASYSQVKHNESKPPVPPSTKPPHSAAQALQAQVLQSSKAPSQPQQSQKTSYRIPYDVALDPRHHLGEFDIDDSASIISSCISTFGESSEIAGFSAAAEQRHLYEQYRKKLMEEKNELKEGSETPCVSLSEKVMTSSTENLKNGNNQQNQQPEPQPPSSSIFNSELTPFGHVAPVAKQFEPTNFPPFSPEKESEIKRSIDLESSQLLVKSKSPAPYSTSSTDHYGTIRRKHKPVAIDLSKSSPNLASQSPSNLFFGASFEEKQNRSPMTSTPSYKEQGFKNDSLNDSLNQAFEIASSIETTKNAYEAPPTPKSASHDRSISDTYPVSSSTTSTWPSHTTTPTTTTAAAPIAAVAPQTYTEQQPMSTSMSSSVMSTNMDEPIVVGSHQQIPQQSPDSSPERNEDMSQWYRKMFKQMHRKGEDGSNEGKEQHFINPSNVTDGIGRTTPTASNLGRSRENLSFNQHRPDHPSSYFDSLEH</original>
    <variation>CDLPKKDVEFKEIDAIYENMKIKNSQRQRSQNSLDLIRITNNLDETTKSLNLYLQQIDATWKRSKSQPIMK</variation>
    <location>
        <begin position="2"/>
        <end position="604"/>
    </location>
</feature>
<feature type="mutagenesis site" description="In gk769190; defects in sarcomere and mitochondrial organization. No motility defects." evidence="5">
    <location>
        <begin position="461"/>
        <end position="1005"/>
    </location>
</feature>
<reference evidence="8" key="1">
    <citation type="journal article" date="1998" name="Science">
        <title>Genome sequence of the nematode C. elegans: a platform for investigating biology.</title>
        <authorList>
            <consortium name="The C. elegans sequencing consortium"/>
        </authorList>
    </citation>
    <scope>NUCLEOTIDE SEQUENCE [LARGE SCALE GENOMIC DNA]</scope>
    <source>
        <strain evidence="8">Bristol N2</strain>
    </source>
</reference>
<reference evidence="7" key="2">
    <citation type="journal article" date="2017" name="Mol. Biol. Cell">
        <title>Caenorhabditis elegans SORB-1 localizes to integrin adhesion sites and is required for organization of sarcomeres and mitochondria in myocytes.</title>
        <authorList>
            <person name="Loveless T."/>
            <person name="Qadota H."/>
            <person name="Benian G.M."/>
            <person name="Hardin J."/>
        </authorList>
    </citation>
    <scope>FUNCTION</scope>
    <scope>INTERACTION WITH DEB-1</scope>
    <scope>SUBCELLULAR LOCATION</scope>
    <scope>TISSUE SPECIFICITY</scope>
    <scope>DEVELOPMENTAL STAGE</scope>
    <scope>DOMAIN</scope>
    <scope>DISRUPTION PHENOTYPE</scope>
    <scope>MUTAGENESIS OF 461-TRP--HIS-1005</scope>
</reference>
<evidence type="ECO:0000255" key="1"/>
<evidence type="ECO:0000255" key="2">
    <source>
        <dbReference type="PROSITE-ProRule" id="PRU00192"/>
    </source>
</evidence>
<evidence type="ECO:0000255" key="3">
    <source>
        <dbReference type="PROSITE-ProRule" id="PRU00195"/>
    </source>
</evidence>
<evidence type="ECO:0000256" key="4">
    <source>
        <dbReference type="SAM" id="MobiDB-lite"/>
    </source>
</evidence>
<evidence type="ECO:0000269" key="5">
    <source>
    </source>
</evidence>
<evidence type="ECO:0000303" key="6">
    <source>
    </source>
</evidence>
<evidence type="ECO:0000305" key="7"/>
<evidence type="ECO:0000312" key="8">
    <source>
        <dbReference type="Proteomes" id="UP000001940"/>
    </source>
</evidence>
<evidence type="ECO:0000312" key="9">
    <source>
        <dbReference type="WormBase" id="Y45F10D.13a"/>
    </source>
</evidence>
<evidence type="ECO:0000312" key="10">
    <source>
        <dbReference type="WormBase" id="Y45F10D.13c"/>
    </source>
</evidence>
<organism evidence="8">
    <name type="scientific">Caenorhabditis elegans</name>
    <dbReference type="NCBI Taxonomy" id="6239"/>
    <lineage>
        <taxon>Eukaryota</taxon>
        <taxon>Metazoa</taxon>
        <taxon>Ecdysozoa</taxon>
        <taxon>Nematoda</taxon>
        <taxon>Chromadorea</taxon>
        <taxon>Rhabditida</taxon>
        <taxon>Rhabditina</taxon>
        <taxon>Rhabditomorpha</taxon>
        <taxon>Rhabditoidea</taxon>
        <taxon>Rhabditidae</taxon>
        <taxon>Peloderinae</taxon>
        <taxon>Caenorhabditis</taxon>
    </lineage>
</organism>
<proteinExistence type="evidence at protein level"/>
<comment type="function">
    <text evidence="5">Required for organization of sarcomeres in body wall muscles and for maintaining normal mitochondrial position in myocytes.</text>
</comment>
<comment type="subunit">
    <text evidence="5">May interact with deb-1.</text>
</comment>
<comment type="interaction">
    <interactant intactId="EBI-325337">
        <id>G5EC32</id>
    </interactant>
    <interactant intactId="EBI-331810">
        <id>Q18605</id>
        <label>athp-1</label>
    </interactant>
    <organismsDiffer>false</organismsDiffer>
    <experiments>4</experiments>
</comment>
<comment type="interaction">
    <interactant intactId="EBI-325337">
        <id>G5EC32</id>
    </interactant>
    <interactant intactId="EBI-2316099">
        <id>B1Q247</id>
        <label>B0507.3</label>
    </interactant>
    <organismsDiffer>false</organismsDiffer>
    <experiments>6</experiments>
</comment>
<comment type="interaction">
    <interactant intactId="EBI-325337">
        <id>G5EC32</id>
    </interactant>
    <interactant intactId="EBI-2316191">
        <id>O01481</id>
        <label>C06A5.8</label>
    </interactant>
    <organismsDiffer>false</organismsDiffer>
    <experiments>8</experiments>
</comment>
<comment type="interaction">
    <interactant intactId="EBI-325337">
        <id>G5EC32</id>
    </interactant>
    <interactant intactId="EBI-317562">
        <id>Q17865</id>
        <label>C09G1.4</label>
    </interactant>
    <organismsDiffer>false</organismsDiffer>
    <experiments>5</experiments>
</comment>
<comment type="interaction">
    <interactant intactId="EBI-325337">
        <id>G5EC32</id>
    </interactant>
    <interactant intactId="EBI-2316478">
        <id>G5EC89</id>
        <label>ceh-17</label>
    </interactant>
    <organismsDiffer>false</organismsDiffer>
    <experiments>4</experiments>
</comment>
<comment type="interaction">
    <interactant intactId="EBI-325337">
        <id>G5EC32</id>
    </interactant>
    <interactant intactId="EBI-326358">
        <id>Q93231</id>
        <label>CELE_C17E4.10</label>
    </interactant>
    <organismsDiffer>false</organismsDiffer>
    <experiments>5</experiments>
</comment>
<comment type="interaction">
    <interactant intactId="EBI-325337">
        <id>G5EC32</id>
    </interactant>
    <interactant intactId="EBI-327612">
        <id>Q966J6</id>
        <label>CELE_F41B4.1</label>
    </interactant>
    <organismsDiffer>false</organismsDiffer>
    <experiments>7</experiments>
</comment>
<comment type="interaction">
    <interactant intactId="EBI-325337">
        <id>G5EC32</id>
    </interactant>
    <interactant intactId="EBI-2316655">
        <id>Q20670</id>
        <label>CELE_F52E10.4</label>
    </interactant>
    <organismsDiffer>false</organismsDiffer>
    <experiments>4</experiments>
</comment>
<comment type="interaction">
    <interactant intactId="EBI-325337">
        <id>G5EC32</id>
    </interactant>
    <interactant intactId="EBI-320525">
        <id>Q22387</id>
        <label>CELE_T11B7.1</label>
    </interactant>
    <organismsDiffer>false</organismsDiffer>
    <experiments>3</experiments>
</comment>
<comment type="interaction">
    <interactant intactId="EBI-325337">
        <id>G5EC32</id>
    </interactant>
    <interactant intactId="EBI-2003118">
        <id>Q7JP75</id>
        <label>cyk-1</label>
    </interactant>
    <organismsDiffer>false</organismsDiffer>
    <experiments>6</experiments>
</comment>
<comment type="interaction">
    <interactant intactId="EBI-325337">
        <id>G5EC32</id>
    </interactant>
    <interactant intactId="EBI-313368">
        <id>O18195</id>
        <label>ddl-2</label>
    </interactant>
    <organismsDiffer>false</organismsDiffer>
    <experiments>6</experiments>
</comment>
<comment type="interaction">
    <interactant intactId="EBI-325337">
        <id>G5EC32</id>
    </interactant>
    <interactant intactId="EBI-2315916">
        <id>G5ED33</id>
        <label>eps-8</label>
    </interactant>
    <organismsDiffer>false</organismsDiffer>
    <experiments>15</experiments>
</comment>
<comment type="interaction">
    <interactant intactId="EBI-325337">
        <id>G5EC32</id>
    </interactant>
    <interactant intactId="EBI-2317613">
        <id>Q9TYU9</id>
        <label>exc-6</label>
    </interactant>
    <organismsDiffer>false</organismsDiffer>
    <experiments>4</experiments>
</comment>
<comment type="interaction">
    <interactant intactId="EBI-325337">
        <id>G5EC32</id>
    </interactant>
    <interactant intactId="EBI-2315966">
        <id>Q17744</id>
        <label>F43B10.1</label>
    </interactant>
    <organismsDiffer>false</organismsDiffer>
    <experiments>6</experiments>
</comment>
<comment type="interaction">
    <interactant intactId="EBI-325337">
        <id>G5EC32</id>
    </interactant>
    <interactant intactId="EBI-320880">
        <id>O16299</id>
        <label>figl-1</label>
    </interactant>
    <organismsDiffer>false</organismsDiffer>
    <experiments>8</experiments>
</comment>
<comment type="interaction">
    <interactant intactId="EBI-325337">
        <id>G5EC32</id>
    </interactant>
    <interactant intactId="EBI-313792">
        <id>Q17746</id>
        <label>gldi-4</label>
    </interactant>
    <organismsDiffer>false</organismsDiffer>
    <experiments>7</experiments>
</comment>
<comment type="interaction">
    <interactant intactId="EBI-325337">
        <id>G5EC32</id>
    </interactant>
    <interactant intactId="EBI-2317687">
        <id>Q3Y407</id>
        <label>grd-7</label>
    </interactant>
    <organismsDiffer>false</organismsDiffer>
    <experiments>4</experiments>
</comment>
<comment type="interaction">
    <interactant intactId="EBI-325337">
        <id>G5EC32</id>
    </interactant>
    <interactant intactId="EBI-326566">
        <id>O45522</id>
        <label>idpp-3</label>
    </interactant>
    <organismsDiffer>false</organismsDiffer>
    <experiments>3</experiments>
</comment>
<comment type="interaction">
    <interactant intactId="EBI-325337">
        <id>G5EC32</id>
    </interactant>
    <interactant intactId="EBI-2316236">
        <id>O45681</id>
        <label>K10H10.4</label>
    </interactant>
    <organismsDiffer>false</organismsDiffer>
    <experiments>6</experiments>
</comment>
<comment type="interaction">
    <interactant intactId="EBI-325337">
        <id>G5EC32</id>
    </interactant>
    <interactant intactId="EBI-311892">
        <id>P45962</id>
        <label>klp-3</label>
    </interactant>
    <organismsDiffer>false</organismsDiffer>
    <experiments>3</experiments>
</comment>
<comment type="interaction">
    <interactant intactId="EBI-325337">
        <id>G5EC32</id>
    </interactant>
    <interactant intactId="EBI-313389">
        <id>O17583</id>
        <label>lin-10</label>
    </interactant>
    <organismsDiffer>false</organismsDiffer>
    <experiments>6</experiments>
</comment>
<comment type="interaction">
    <interactant intactId="EBI-325337">
        <id>G5EC32</id>
    </interactant>
    <interactant intactId="EBI-2315745">
        <id>Q9TYX9</id>
        <label>M57.1</label>
    </interactant>
    <organismsDiffer>false</organismsDiffer>
    <experiments>10</experiments>
</comment>
<comment type="interaction">
    <interactant intactId="EBI-325337">
        <id>G5EC32</id>
    </interactant>
    <interactant intactId="EBI-2316177">
        <id>Q22002</id>
        <label>mab-10</label>
    </interactant>
    <organismsDiffer>false</organismsDiffer>
    <experiments>4</experiments>
</comment>
<comment type="interaction">
    <interactant intactId="EBI-325337">
        <id>G5EC32</id>
    </interactant>
    <interactant intactId="EBI-2315872">
        <id>P34400</id>
        <label>mig-10</label>
    </interactant>
    <organismsDiffer>false</organismsDiffer>
    <experiments>7</experiments>
</comment>
<comment type="interaction">
    <interactant intactId="EBI-325337">
        <id>G5EC32</id>
    </interactant>
    <interactant intactId="EBI-314158">
        <id>Q03601</id>
        <label>nhl-1</label>
    </interactant>
    <organismsDiffer>false</organismsDiffer>
    <experiments>7</experiments>
</comment>
<comment type="interaction">
    <interactant intactId="EBI-325337">
        <id>G5EC32</id>
    </interactant>
    <interactant intactId="EBI-327642">
        <id>Q95QA6</id>
        <label>pat-12</label>
    </interactant>
    <organismsDiffer>false</organismsDiffer>
    <experiments>13</experiments>
</comment>
<comment type="interaction">
    <interactant intactId="EBI-325337">
        <id>G5EC32</id>
    </interactant>
    <interactant intactId="EBI-320780">
        <id>O62203</id>
        <label>phm-2</label>
    </interactant>
    <organismsDiffer>false</organismsDiffer>
    <experiments>7</experiments>
</comment>
<comment type="interaction">
    <interactant intactId="EBI-325337">
        <id>G5EC32</id>
    </interactant>
    <interactant intactId="EBI-2316106">
        <id>Q09442</id>
        <label>sap-49</label>
    </interactant>
    <organismsDiffer>false</organismsDiffer>
    <experiments>16</experiments>
</comment>
<comment type="interaction">
    <interactant intactId="EBI-325337">
        <id>G5EC32</id>
    </interactant>
    <interactant intactId="EBI-327608">
        <id>Q20010</id>
        <label>sas-5</label>
    </interactant>
    <organismsDiffer>false</organismsDiffer>
    <experiments>3</experiments>
</comment>
<comment type="interaction">
    <interactant intactId="EBI-325337">
        <id>G5EC32</id>
    </interactant>
    <interactant intactId="EBI-315356">
        <id>Q19019</id>
        <label>sli-1</label>
    </interactant>
    <organismsDiffer>false</organismsDiffer>
    <experiments>6</experiments>
</comment>
<comment type="interaction">
    <interactant intactId="EBI-325337">
        <id>G5EC32</id>
    </interactant>
    <interactant intactId="EBI-2316201">
        <id>Q8MXU3</id>
        <label>snn-1</label>
    </interactant>
    <organismsDiffer>false</organismsDiffer>
    <experiments>3</experiments>
</comment>
<comment type="interaction">
    <interactant intactId="EBI-325337">
        <id>G5EC32</id>
    </interactant>
    <interactant intactId="EBI-2316564">
        <id>Q1XFY2</id>
        <label>tag-343</label>
    </interactant>
    <organismsDiffer>false</organismsDiffer>
    <experiments>3</experiments>
</comment>
<comment type="interaction">
    <interactant intactId="EBI-325337">
        <id>G5EC32</id>
    </interactant>
    <interactant intactId="EBI-330989">
        <id>Q9U2Z0</id>
        <label>ttx-1</label>
    </interactant>
    <organismsDiffer>false</organismsDiffer>
    <experiments>6</experiments>
</comment>
<comment type="interaction">
    <interactant intactId="EBI-325337">
        <id>G5EC32</id>
    </interactant>
    <interactant intactId="EBI-311866">
        <id>Q9XZI6</id>
        <label>unc-11</label>
    </interactant>
    <organismsDiffer>false</organismsDiffer>
    <experiments>3</experiments>
</comment>
<comment type="interaction">
    <interactant intactId="EBI-325337">
        <id>G5EC32</id>
    </interactant>
    <interactant intactId="EBI-319610">
        <id>G5EDS1</id>
        <label>vab-3</label>
    </interactant>
    <organismsDiffer>false</organismsDiffer>
    <experiments>14</experiments>
</comment>
<comment type="interaction">
    <interactant intactId="EBI-325337">
        <id>G5EC32</id>
    </interactant>
    <interactant intactId="EBI-2316131">
        <id>Q17795</id>
        <label>wsp-1</label>
    </interactant>
    <organismsDiffer>false</organismsDiffer>
    <experiments>12</experiments>
</comment>
<comment type="interaction">
    <interactant intactId="EBI-325337">
        <id>G5EC32</id>
    </interactant>
    <interactant intactId="EBI-2316008">
        <id>Q8MQE6</id>
        <label>wsp-1</label>
    </interactant>
    <organismsDiffer>false</organismsDiffer>
    <experiments>5</experiments>
</comment>
<comment type="interaction">
    <interactant intactId="EBI-325337">
        <id>G5EC32</id>
    </interactant>
    <interactant intactId="EBI-312105">
        <id>Q9XVK6</id>
        <label>wve-1</label>
    </interactant>
    <organismsDiffer>false</organismsDiffer>
    <experiments>6</experiments>
</comment>
<comment type="interaction">
    <interactant intactId="EBI-325337">
        <id>G5EC32</id>
    </interactant>
    <interactant intactId="EBI-2316345">
        <id>Q95Y58</id>
        <label>Y50D4A.4</label>
    </interactant>
    <organismsDiffer>false</organismsDiffer>
    <experiments>4</experiments>
</comment>
<comment type="interaction">
    <interactant intactId="EBI-325337">
        <id>G5EC32</id>
    </interactant>
    <interactant intactId="EBI-2315779">
        <id>O02174</id>
        <label>zfp-3</label>
    </interactant>
    <organismsDiffer>false</organismsDiffer>
    <experiments>4</experiments>
</comment>
<comment type="subcellular location">
    <subcellularLocation>
        <location evidence="5">Cell junction</location>
        <location evidence="5">Adherens junction</location>
    </subcellularLocation>
    <subcellularLocation>
        <location evidence="5">Cell membrane</location>
    </subcellularLocation>
    <subcellularLocation>
        <location evidence="5">Cell junction</location>
        <location evidence="5">Focal adhesion</location>
    </subcellularLocation>
    <text evidence="5">Localizes to adhesion plaques and dense bodies between myocytes (PubMed:28978740). Co-localizes with deb-1 and atn-1 at dense bodies (PubMed:28978740). Predominantly localizes to the membrane-proximal region of dense bodies (PubMed:28978740).</text>
</comment>
<comment type="alternative products">
    <event type="alternative splicing"/>
    <isoform>
        <id>G5EC32-1</id>
        <name evidence="9">a</name>
        <sequence type="displayed"/>
    </isoform>
    <isoform>
        <id>G5EC32-2</id>
        <name evidence="10">c</name>
        <sequence type="described" ref="VSP_060226"/>
    </isoform>
</comment>
<comment type="tissue specificity">
    <text evidence="5">Expressed in body wall muscles, muscle arm attachment sites at the nerve ring, all non-striated muscles, and distal tip cells of the gonad (PubMed:28978740). Highly expressed in the origins and insertions of the vulval and anal depressor muscles and the spicule-associated and diagonal muscles of the male tail (PubMed:28978740). Expressed in small puncta throughout the uterus, stomatointestinal muscle and proximal gonadal sheath tissues (PubMed:28978740). Not expressed in the pharynx (PubMed:28978740).</text>
</comment>
<comment type="developmental stage">
    <text evidence="5">Expressed from embryos to adults (PubMed:28978740). First expressed at the twofold stage of embryonic elongation (PubMed:28978740). Localizes to distal tip cells of the gonad from the late L4 stage to adulthood (PubMed:28978740).</text>
</comment>
<comment type="domain">
    <text evidence="5">SH3 domains 1 and 2 are required for its localization to the cell membrane of dense bodies.</text>
</comment>
<comment type="disruption phenotype">
    <text evidence="5">RNAi-mediated knockdown results in no defects in brood size or locomotion compared to wild-type (PubMed:28978740). No defects in cytoneme length of distal tip cells (PubMed:28978740).</text>
</comment>
<keyword id="KW-0025">Alternative splicing</keyword>
<keyword id="KW-0965">Cell junction</keyword>
<keyword id="KW-1003">Cell membrane</keyword>
<keyword id="KW-0175">Coiled coil</keyword>
<keyword id="KW-0472">Membrane</keyword>
<keyword id="KW-1185">Reference proteome</keyword>
<keyword id="KW-0677">Repeat</keyword>
<keyword id="KW-0728">SH3 domain</keyword>